<accession>B7LR43</accession>
<name>GLMM_ESCF3</name>
<gene>
    <name evidence="1" type="primary">glmM</name>
    <name type="ordered locus">EFER_3153</name>
</gene>
<sequence length="445" mass="47575">MSNRKYFGTDGIRGRVGDAPITPDFVLKLGWAAGKVLARHGSRKIIIGKDTRISGYMLESALEAGLAAAGLSALFTGPMPTPAVAYLTRTFRAEAGIVISASHNPFYDNGIKFFSIDGTKLPDAVEEAIEAEMEKEISCVDSAELGKASRIVDAAGRYIEFCKATFPNELSLSELKIVVDCANGATYHIAPNVLRELGANVIAIGCEPNGVNINAEVGATDVRALQARVLAEKADLGIAFDGDGDRVIMVDHEGNKVDGDQIMYIIAREGLRQGQLRGGAVGTLMSNMGLELALKQLGIPFARAKVGDRYVLEKMQEKGWRIGAENSGHVILLDKTTTGDGIVAGLQVLAAMARNHMSLHDLCSGMKMFPQILVNVRYTAGSGDPLEHESVKAVTAEVEAALGSRGRVLLRKSGTEPLIRVMVEGEDEEQVTEFAHRIADAVKAV</sequence>
<evidence type="ECO:0000255" key="1">
    <source>
        <dbReference type="HAMAP-Rule" id="MF_01554"/>
    </source>
</evidence>
<feature type="chain" id="PRO_1000201098" description="Phosphoglucosamine mutase">
    <location>
        <begin position="1"/>
        <end position="445"/>
    </location>
</feature>
<feature type="active site" description="Phosphoserine intermediate" evidence="1">
    <location>
        <position position="102"/>
    </location>
</feature>
<feature type="binding site" description="via phosphate group" evidence="1">
    <location>
        <position position="102"/>
    </location>
    <ligand>
        <name>Mg(2+)</name>
        <dbReference type="ChEBI" id="CHEBI:18420"/>
    </ligand>
</feature>
<feature type="binding site" evidence="1">
    <location>
        <position position="241"/>
    </location>
    <ligand>
        <name>Mg(2+)</name>
        <dbReference type="ChEBI" id="CHEBI:18420"/>
    </ligand>
</feature>
<feature type="binding site" evidence="1">
    <location>
        <position position="243"/>
    </location>
    <ligand>
        <name>Mg(2+)</name>
        <dbReference type="ChEBI" id="CHEBI:18420"/>
    </ligand>
</feature>
<feature type="binding site" evidence="1">
    <location>
        <position position="245"/>
    </location>
    <ligand>
        <name>Mg(2+)</name>
        <dbReference type="ChEBI" id="CHEBI:18420"/>
    </ligand>
</feature>
<feature type="modified residue" description="Phosphoserine" evidence="1">
    <location>
        <position position="102"/>
    </location>
</feature>
<organism>
    <name type="scientific">Escherichia fergusonii (strain ATCC 35469 / DSM 13698 / CCUG 18766 / IAM 14443 / JCM 21226 / LMG 7866 / NBRC 102419 / NCTC 12128 / CDC 0568-73)</name>
    <dbReference type="NCBI Taxonomy" id="585054"/>
    <lineage>
        <taxon>Bacteria</taxon>
        <taxon>Pseudomonadati</taxon>
        <taxon>Pseudomonadota</taxon>
        <taxon>Gammaproteobacteria</taxon>
        <taxon>Enterobacterales</taxon>
        <taxon>Enterobacteriaceae</taxon>
        <taxon>Escherichia</taxon>
    </lineage>
</organism>
<comment type="function">
    <text evidence="1">Catalyzes the conversion of glucosamine-6-phosphate to glucosamine-1-phosphate.</text>
</comment>
<comment type="catalytic activity">
    <reaction evidence="1">
        <text>alpha-D-glucosamine 1-phosphate = D-glucosamine 6-phosphate</text>
        <dbReference type="Rhea" id="RHEA:23424"/>
        <dbReference type="ChEBI" id="CHEBI:58516"/>
        <dbReference type="ChEBI" id="CHEBI:58725"/>
        <dbReference type="EC" id="5.4.2.10"/>
    </reaction>
</comment>
<comment type="cofactor">
    <cofactor evidence="1">
        <name>Mg(2+)</name>
        <dbReference type="ChEBI" id="CHEBI:18420"/>
    </cofactor>
    <text evidence="1">Binds 1 Mg(2+) ion per subunit.</text>
</comment>
<comment type="PTM">
    <text evidence="1">Activated by phosphorylation.</text>
</comment>
<comment type="similarity">
    <text evidence="1">Belongs to the phosphohexose mutase family.</text>
</comment>
<protein>
    <recommendedName>
        <fullName evidence="1">Phosphoglucosamine mutase</fullName>
        <ecNumber evidence="1">5.4.2.10</ecNumber>
    </recommendedName>
</protein>
<reference key="1">
    <citation type="journal article" date="2009" name="PLoS Genet.">
        <title>Organised genome dynamics in the Escherichia coli species results in highly diverse adaptive paths.</title>
        <authorList>
            <person name="Touchon M."/>
            <person name="Hoede C."/>
            <person name="Tenaillon O."/>
            <person name="Barbe V."/>
            <person name="Baeriswyl S."/>
            <person name="Bidet P."/>
            <person name="Bingen E."/>
            <person name="Bonacorsi S."/>
            <person name="Bouchier C."/>
            <person name="Bouvet O."/>
            <person name="Calteau A."/>
            <person name="Chiapello H."/>
            <person name="Clermont O."/>
            <person name="Cruveiller S."/>
            <person name="Danchin A."/>
            <person name="Diard M."/>
            <person name="Dossat C."/>
            <person name="Karoui M.E."/>
            <person name="Frapy E."/>
            <person name="Garry L."/>
            <person name="Ghigo J.M."/>
            <person name="Gilles A.M."/>
            <person name="Johnson J."/>
            <person name="Le Bouguenec C."/>
            <person name="Lescat M."/>
            <person name="Mangenot S."/>
            <person name="Martinez-Jehanne V."/>
            <person name="Matic I."/>
            <person name="Nassif X."/>
            <person name="Oztas S."/>
            <person name="Petit M.A."/>
            <person name="Pichon C."/>
            <person name="Rouy Z."/>
            <person name="Ruf C.S."/>
            <person name="Schneider D."/>
            <person name="Tourret J."/>
            <person name="Vacherie B."/>
            <person name="Vallenet D."/>
            <person name="Medigue C."/>
            <person name="Rocha E.P.C."/>
            <person name="Denamur E."/>
        </authorList>
    </citation>
    <scope>NUCLEOTIDE SEQUENCE [LARGE SCALE GENOMIC DNA]</scope>
    <source>
        <strain>ATCC 35469 / DSM 13698 / BCRC 15582 / CCUG 18766 / IAM 14443 / JCM 21226 / LMG 7866 / NBRC 102419 / NCTC 12128 / CDC 0568-73</strain>
    </source>
</reference>
<dbReference type="EC" id="5.4.2.10" evidence="1"/>
<dbReference type="EMBL" id="CU928158">
    <property type="protein sequence ID" value="CAQ90646.1"/>
    <property type="molecule type" value="Genomic_DNA"/>
</dbReference>
<dbReference type="RefSeq" id="WP_000071138.1">
    <property type="nucleotide sequence ID" value="NC_011740.1"/>
</dbReference>
<dbReference type="SMR" id="B7LR43"/>
<dbReference type="GeneID" id="75060229"/>
<dbReference type="KEGG" id="efe:EFER_3153"/>
<dbReference type="HOGENOM" id="CLU_016950_7_0_6"/>
<dbReference type="OrthoDB" id="9803322at2"/>
<dbReference type="Proteomes" id="UP000000745">
    <property type="component" value="Chromosome"/>
</dbReference>
<dbReference type="GO" id="GO:0005829">
    <property type="term" value="C:cytosol"/>
    <property type="evidence" value="ECO:0007669"/>
    <property type="project" value="TreeGrafter"/>
</dbReference>
<dbReference type="GO" id="GO:0000287">
    <property type="term" value="F:magnesium ion binding"/>
    <property type="evidence" value="ECO:0007669"/>
    <property type="project" value="UniProtKB-UniRule"/>
</dbReference>
<dbReference type="GO" id="GO:0008966">
    <property type="term" value="F:phosphoglucosamine mutase activity"/>
    <property type="evidence" value="ECO:0007669"/>
    <property type="project" value="UniProtKB-UniRule"/>
</dbReference>
<dbReference type="GO" id="GO:0004615">
    <property type="term" value="F:phosphomannomutase activity"/>
    <property type="evidence" value="ECO:0007669"/>
    <property type="project" value="TreeGrafter"/>
</dbReference>
<dbReference type="GO" id="GO:0005975">
    <property type="term" value="P:carbohydrate metabolic process"/>
    <property type="evidence" value="ECO:0007669"/>
    <property type="project" value="InterPro"/>
</dbReference>
<dbReference type="GO" id="GO:0009252">
    <property type="term" value="P:peptidoglycan biosynthetic process"/>
    <property type="evidence" value="ECO:0007669"/>
    <property type="project" value="TreeGrafter"/>
</dbReference>
<dbReference type="GO" id="GO:0006048">
    <property type="term" value="P:UDP-N-acetylglucosamine biosynthetic process"/>
    <property type="evidence" value="ECO:0007669"/>
    <property type="project" value="TreeGrafter"/>
</dbReference>
<dbReference type="CDD" id="cd05802">
    <property type="entry name" value="GlmM"/>
    <property type="match status" value="1"/>
</dbReference>
<dbReference type="FunFam" id="3.30.310.50:FF:000001">
    <property type="entry name" value="Phosphoglucosamine mutase"/>
    <property type="match status" value="1"/>
</dbReference>
<dbReference type="FunFam" id="3.40.120.10:FF:000001">
    <property type="entry name" value="Phosphoglucosamine mutase"/>
    <property type="match status" value="1"/>
</dbReference>
<dbReference type="FunFam" id="3.40.120.10:FF:000002">
    <property type="entry name" value="Phosphoglucosamine mutase"/>
    <property type="match status" value="1"/>
</dbReference>
<dbReference type="Gene3D" id="3.40.120.10">
    <property type="entry name" value="Alpha-D-Glucose-1,6-Bisphosphate, subunit A, domain 3"/>
    <property type="match status" value="3"/>
</dbReference>
<dbReference type="Gene3D" id="3.30.310.50">
    <property type="entry name" value="Alpha-D-phosphohexomutase, C-terminal domain"/>
    <property type="match status" value="1"/>
</dbReference>
<dbReference type="HAMAP" id="MF_01554_B">
    <property type="entry name" value="GlmM_B"/>
    <property type="match status" value="1"/>
</dbReference>
<dbReference type="InterPro" id="IPR005844">
    <property type="entry name" value="A-D-PHexomutase_a/b/a-I"/>
</dbReference>
<dbReference type="InterPro" id="IPR016055">
    <property type="entry name" value="A-D-PHexomutase_a/b/a-I/II/III"/>
</dbReference>
<dbReference type="InterPro" id="IPR005845">
    <property type="entry name" value="A-D-PHexomutase_a/b/a-II"/>
</dbReference>
<dbReference type="InterPro" id="IPR005846">
    <property type="entry name" value="A-D-PHexomutase_a/b/a-III"/>
</dbReference>
<dbReference type="InterPro" id="IPR005843">
    <property type="entry name" value="A-D-PHexomutase_C"/>
</dbReference>
<dbReference type="InterPro" id="IPR036900">
    <property type="entry name" value="A-D-PHexomutase_C_sf"/>
</dbReference>
<dbReference type="InterPro" id="IPR016066">
    <property type="entry name" value="A-D-PHexomutase_CS"/>
</dbReference>
<dbReference type="InterPro" id="IPR005841">
    <property type="entry name" value="Alpha-D-phosphohexomutase_SF"/>
</dbReference>
<dbReference type="InterPro" id="IPR006352">
    <property type="entry name" value="GlmM_bact"/>
</dbReference>
<dbReference type="InterPro" id="IPR050060">
    <property type="entry name" value="Phosphoglucosamine_mutase"/>
</dbReference>
<dbReference type="NCBIfam" id="TIGR01455">
    <property type="entry name" value="glmM"/>
    <property type="match status" value="1"/>
</dbReference>
<dbReference type="NCBIfam" id="NF008139">
    <property type="entry name" value="PRK10887.1"/>
    <property type="match status" value="1"/>
</dbReference>
<dbReference type="PANTHER" id="PTHR42946:SF1">
    <property type="entry name" value="PHOSPHOGLUCOMUTASE (ALPHA-D-GLUCOSE-1,6-BISPHOSPHATE-DEPENDENT)"/>
    <property type="match status" value="1"/>
</dbReference>
<dbReference type="PANTHER" id="PTHR42946">
    <property type="entry name" value="PHOSPHOHEXOSE MUTASE"/>
    <property type="match status" value="1"/>
</dbReference>
<dbReference type="Pfam" id="PF02878">
    <property type="entry name" value="PGM_PMM_I"/>
    <property type="match status" value="1"/>
</dbReference>
<dbReference type="Pfam" id="PF02879">
    <property type="entry name" value="PGM_PMM_II"/>
    <property type="match status" value="1"/>
</dbReference>
<dbReference type="Pfam" id="PF02880">
    <property type="entry name" value="PGM_PMM_III"/>
    <property type="match status" value="1"/>
</dbReference>
<dbReference type="Pfam" id="PF00408">
    <property type="entry name" value="PGM_PMM_IV"/>
    <property type="match status" value="1"/>
</dbReference>
<dbReference type="PRINTS" id="PR00509">
    <property type="entry name" value="PGMPMM"/>
</dbReference>
<dbReference type="SUPFAM" id="SSF55957">
    <property type="entry name" value="Phosphoglucomutase, C-terminal domain"/>
    <property type="match status" value="1"/>
</dbReference>
<dbReference type="SUPFAM" id="SSF53738">
    <property type="entry name" value="Phosphoglucomutase, first 3 domains"/>
    <property type="match status" value="3"/>
</dbReference>
<dbReference type="PROSITE" id="PS00710">
    <property type="entry name" value="PGM_PMM"/>
    <property type="match status" value="1"/>
</dbReference>
<proteinExistence type="inferred from homology"/>
<keyword id="KW-0413">Isomerase</keyword>
<keyword id="KW-0460">Magnesium</keyword>
<keyword id="KW-0479">Metal-binding</keyword>
<keyword id="KW-0597">Phosphoprotein</keyword>